<reference key="1">
    <citation type="journal article" date="2005" name="Nature">
        <title>Genome sequencing and analysis of Aspergillus oryzae.</title>
        <authorList>
            <person name="Machida M."/>
            <person name="Asai K."/>
            <person name="Sano M."/>
            <person name="Tanaka T."/>
            <person name="Kumagai T."/>
            <person name="Terai G."/>
            <person name="Kusumoto K."/>
            <person name="Arima T."/>
            <person name="Akita O."/>
            <person name="Kashiwagi Y."/>
            <person name="Abe K."/>
            <person name="Gomi K."/>
            <person name="Horiuchi H."/>
            <person name="Kitamoto K."/>
            <person name="Kobayashi T."/>
            <person name="Takeuchi M."/>
            <person name="Denning D.W."/>
            <person name="Galagan J.E."/>
            <person name="Nierman W.C."/>
            <person name="Yu J."/>
            <person name="Archer D.B."/>
            <person name="Bennett J.W."/>
            <person name="Bhatnagar D."/>
            <person name="Cleveland T.E."/>
            <person name="Fedorova N.D."/>
            <person name="Gotoh O."/>
            <person name="Horikawa H."/>
            <person name="Hosoyama A."/>
            <person name="Ichinomiya M."/>
            <person name="Igarashi R."/>
            <person name="Iwashita K."/>
            <person name="Juvvadi P.R."/>
            <person name="Kato M."/>
            <person name="Kato Y."/>
            <person name="Kin T."/>
            <person name="Kokubun A."/>
            <person name="Maeda H."/>
            <person name="Maeyama N."/>
            <person name="Maruyama J."/>
            <person name="Nagasaki H."/>
            <person name="Nakajima T."/>
            <person name="Oda K."/>
            <person name="Okada K."/>
            <person name="Paulsen I."/>
            <person name="Sakamoto K."/>
            <person name="Sawano T."/>
            <person name="Takahashi M."/>
            <person name="Takase K."/>
            <person name="Terabayashi Y."/>
            <person name="Wortman J.R."/>
            <person name="Yamada O."/>
            <person name="Yamagata Y."/>
            <person name="Anazawa H."/>
            <person name="Hata Y."/>
            <person name="Koide Y."/>
            <person name="Komori T."/>
            <person name="Koyama Y."/>
            <person name="Minetoki T."/>
            <person name="Suharnan S."/>
            <person name="Tanaka A."/>
            <person name="Isono K."/>
            <person name="Kuhara S."/>
            <person name="Ogasawara N."/>
            <person name="Kikuchi H."/>
        </authorList>
    </citation>
    <scope>NUCLEOTIDE SEQUENCE [LARGE SCALE GENOMIC DNA]</scope>
    <source>
        <strain>ATCC 42149 / RIB 40</strain>
    </source>
</reference>
<reference key="2">
    <citation type="journal article" date="1994" name="J. Pharm. Pharmacol.">
        <title>Kojic acid, a cosmetic skin whitening agent, is a slow-binding inhibitor of catecholase activity of tyrosinase.</title>
        <authorList>
            <person name="Cabanes J."/>
            <person name="Chazarra S."/>
            <person name="Garcia-Carmona F."/>
        </authorList>
    </citation>
    <scope>BIOTECHNOLOGY</scope>
</reference>
<reference key="3">
    <citation type="journal article" date="2006" name="Nat. Prod. Rep.">
        <title>From miso, sake and shoyu to cosmetics: a century of science for kojic acid.</title>
        <authorList>
            <person name="Bentley R."/>
        </authorList>
    </citation>
    <scope>REVIEW ON BIOTECHNOLOGY</scope>
</reference>
<reference key="4">
    <citation type="journal article" date="2010" name="Fungal Genet. Biol.">
        <title>Identification and characterization of genes responsible for biosynthesis of kojic acid, an industrially important compound from Aspergillus oryzae.</title>
        <authorList>
            <person name="Terabayashi Y."/>
            <person name="Sano M."/>
            <person name="Yamane N."/>
            <person name="Marui J."/>
            <person name="Tamano K."/>
            <person name="Sagara J."/>
            <person name="Dohmoto M."/>
            <person name="Oda K."/>
            <person name="Ohshima E."/>
            <person name="Tachibana K."/>
            <person name="Higa Y."/>
            <person name="Ohashi S."/>
            <person name="Koike H."/>
            <person name="Machida M."/>
        </authorList>
    </citation>
    <scope>FUNCTION</scope>
    <scope>DISRUPTION PHENOTYPE</scope>
</reference>
<reference key="5">
    <citation type="journal article" date="2011" name="Biosci. Biotechnol. Biochem.">
        <title>Aspergillus oryzae laeA regulates kojic acid synthesis genes.</title>
        <authorList>
            <person name="Oda K."/>
            <person name="Kobayashi A."/>
            <person name="Ohashi S."/>
            <person name="Sano M."/>
        </authorList>
    </citation>
    <scope>INDUCTION</scope>
</reference>
<reference key="6">
    <citation type="journal article" date="2011" name="J. Biosci. Bioeng.">
        <title>Kojic acid biosynthesis in Aspergillus oryzae is regulated by a Zn(II)(2)Cys(6) transcriptional activator and induced by kojic acid at the transcriptional level.</title>
        <authorList>
            <person name="Marui J."/>
            <person name="Yamane N."/>
            <person name="Ohashi-Kunihiro S."/>
            <person name="Ando T."/>
            <person name="Terabayashi Y."/>
            <person name="Sano M."/>
            <person name="Ohashi S."/>
            <person name="Ohshima E."/>
            <person name="Tachibana K."/>
            <person name="Higa Y."/>
            <person name="Nishimura M."/>
            <person name="Koike H."/>
            <person name="Machida M."/>
        </authorList>
    </citation>
    <scope>INDUCTION</scope>
</reference>
<reference key="7">
    <citation type="journal article" date="2016" name="J. Biotechnol.">
        <title>Evaluation of kojic acid production in a repeated-batch PCS biofilm reactor.</title>
        <authorList>
            <person name="Liu J.M."/>
            <person name="Yu T.C."/>
            <person name="Lin S.P."/>
            <person name="Hsu R.J."/>
            <person name="Hsu K.D."/>
            <person name="Cheng K.C."/>
        </authorList>
    </citation>
    <scope>INDUCTION</scope>
</reference>
<reference key="8">
    <citation type="journal article" date="2016" name="J. Microbiol. Biotechnol.">
        <title>Nematicidal activity of kojic acid produced by Aspergillus oryzae against Meloidogyne incognita.</title>
        <authorList>
            <person name="Kim T.Y."/>
            <person name="Jang J.Y."/>
            <person name="Jeon S.J."/>
            <person name="Lee H.W."/>
            <person name="Bae C.H."/>
            <person name="Yeo J.H."/>
            <person name="Lee H.B."/>
            <person name="Kim I.S."/>
            <person name="Park H.W."/>
            <person name="Kim J.C."/>
        </authorList>
    </citation>
    <scope>BIOTECHNOLOGY</scope>
</reference>
<reference key="9">
    <citation type="journal article" date="2019" name="Fungal Genet. Biol.">
        <title>A unique Zn(II)2-Cys6-type protein, KpeA, is involved in secondary metabolism and conidiation in Aspergillus oryzae.</title>
        <authorList>
            <person name="Arakawa G.Y."/>
            <person name="Kudo H."/>
            <person name="Yanase A."/>
            <person name="Eguchi Y."/>
            <person name="Kodama H."/>
            <person name="Ogawa M."/>
            <person name="Koyama Y."/>
            <person name="Shindo H."/>
            <person name="Hosaka M."/>
            <person name="Tokuoka M."/>
        </authorList>
    </citation>
    <scope>INDUCTION</scope>
</reference>
<reference key="10">
    <citation type="journal article" date="2021" name="Arch. Microbiol.">
        <title>Identification and characterization of a novel gene Aokap1 involved in growth and kojic acid synthesis in Aspergillus oryzae.</title>
        <authorList>
            <person name="Li Y."/>
            <person name="Zhang H."/>
            <person name="Chen Z."/>
            <person name="Fan J."/>
            <person name="Chen T."/>
            <person name="Zeng B."/>
            <person name="Zhang Z."/>
        </authorList>
    </citation>
    <scope>INDUCTION</scope>
</reference>
<reference key="11">
    <citation type="journal article" date="2022" name="Folia Microbiol. (Praha)">
        <title>Construction of single, double, or triple mutants within kojic acid synthesis genes kojA, kojR, and kojT by the CRISPR/Cas9 tool in Aspergillus oryzae.</title>
        <authorList>
            <person name="Li Y."/>
            <person name="Zhang H."/>
            <person name="Chen Z."/>
            <person name="Fan J."/>
            <person name="Chen T."/>
            <person name="Zeng B."/>
            <person name="Zhang Z."/>
        </authorList>
    </citation>
    <scope>FUNCTION</scope>
    <scope>DISRUPTION PHENOTYPE</scope>
</reference>
<reference key="12">
    <citation type="journal article" date="2022" name="Mol. Biol. Rep.">
        <title>Overexpression of a novel gene Aokap2 affects the growth and kojic acid production in Aspergillus oryzae.</title>
        <authorList>
            <person name="Li Y."/>
            <person name="Zhang H."/>
            <person name="Chen Z."/>
            <person name="Fan J."/>
            <person name="Chen T."/>
            <person name="Xiao Y."/>
            <person name="Jie J."/>
            <person name="Zeng B."/>
            <person name="Zhang Z."/>
        </authorList>
    </citation>
    <scope>FUNCTION</scope>
    <scope>INDUCTION</scope>
    <scope>DISRUPTION PHENOTYPE</scope>
</reference>
<reference key="13">
    <citation type="journal article" date="2022" name="World J. Microbiol. Biotechnol.">
        <title>Disruption of Aokap6 near the kojic acid gene cluster affects the growth and kojic acid production in Aspergillus oryzae.</title>
        <authorList>
            <person name="Chen Z."/>
            <person name="Chen T."/>
            <person name="Wang H."/>
            <person name="Jiang C."/>
            <person name="Liu Y."/>
            <person name="Wu X."/>
            <person name="Li Y."/>
            <person name="Zeng B."/>
            <person name="Zhang Z."/>
        </authorList>
    </citation>
    <scope>DISRUPTION PHENOTYPE</scope>
    <scope>INDUCTION</scope>
</reference>
<reference key="14">
    <citation type="journal article" date="2024" name="Gene">
        <title>Overexpression of kojR and the entire koj gene cluster affect the kojic acid synthesis in Aspergillus oryzae 3.042.</title>
        <authorList>
            <person name="Zhang X."/>
            <person name="Guo R."/>
            <person name="Bi F."/>
            <person name="Chen Y."/>
            <person name="Xue X."/>
            <person name="Wang D."/>
        </authorList>
    </citation>
    <scope>FUNCTION</scope>
</reference>
<evidence type="ECO:0000250" key="1">
    <source>
        <dbReference type="UniProtKB" id="P20586"/>
    </source>
</evidence>
<evidence type="ECO:0000269" key="2">
    <source>
    </source>
</evidence>
<evidence type="ECO:0000269" key="3">
    <source>
    </source>
</evidence>
<evidence type="ECO:0000269" key="4">
    <source>
    </source>
</evidence>
<evidence type="ECO:0000269" key="5">
    <source>
    </source>
</evidence>
<evidence type="ECO:0000269" key="6">
    <source>
    </source>
</evidence>
<evidence type="ECO:0000269" key="7">
    <source>
    </source>
</evidence>
<evidence type="ECO:0000269" key="8">
    <source>
    </source>
</evidence>
<evidence type="ECO:0000269" key="9">
    <source>
    </source>
</evidence>
<evidence type="ECO:0000269" key="10">
    <source>
    </source>
</evidence>
<evidence type="ECO:0000269" key="11">
    <source>
    </source>
</evidence>
<evidence type="ECO:0000269" key="12">
    <source>
    </source>
</evidence>
<evidence type="ECO:0000269" key="13">
    <source>
    </source>
</evidence>
<evidence type="ECO:0000269" key="14">
    <source>
    </source>
</evidence>
<evidence type="ECO:0000303" key="15">
    <source>
    </source>
</evidence>
<evidence type="ECO:0000305" key="16"/>
<evidence type="ECO:0000305" key="17">
    <source>
    </source>
</evidence>
<dbReference type="EC" id="1.14.13.-" evidence="17"/>
<dbReference type="EMBL" id="BA000053">
    <property type="protein sequence ID" value="BAE63185.1"/>
    <property type="molecule type" value="Genomic_DNA"/>
</dbReference>
<dbReference type="RefSeq" id="XP_001824318.1">
    <property type="nucleotide sequence ID" value="XM_001824266.1"/>
</dbReference>
<dbReference type="SMR" id="Q2U5I0"/>
<dbReference type="STRING" id="510516.Q2U5I0"/>
<dbReference type="EnsemblFungi" id="BAE63185">
    <property type="protein sequence ID" value="BAE63185"/>
    <property type="gene ID" value="AO090113000136"/>
</dbReference>
<dbReference type="GeneID" id="5995965"/>
<dbReference type="KEGG" id="aor:AO090113000136"/>
<dbReference type="VEuPathDB" id="FungiDB:AO090113000136"/>
<dbReference type="HOGENOM" id="CLU_565958_0_0_1"/>
<dbReference type="OMA" id="LYYEGPP"/>
<dbReference type="OrthoDB" id="3230at5052"/>
<dbReference type="Proteomes" id="UP000006564">
    <property type="component" value="Chromosome 5"/>
</dbReference>
<dbReference type="GO" id="GO:0005737">
    <property type="term" value="C:cytoplasm"/>
    <property type="evidence" value="ECO:0007669"/>
    <property type="project" value="TreeGrafter"/>
</dbReference>
<dbReference type="GO" id="GO:0004497">
    <property type="term" value="F:monooxygenase activity"/>
    <property type="evidence" value="ECO:0007669"/>
    <property type="project" value="UniProtKB-KW"/>
</dbReference>
<dbReference type="GO" id="GO:2001317">
    <property type="term" value="P:kojic acid biosynthetic process"/>
    <property type="evidence" value="ECO:0000315"/>
    <property type="project" value="GO_Central"/>
</dbReference>
<dbReference type="Gene3D" id="3.30.9.10">
    <property type="entry name" value="D-Amino Acid Oxidase, subunit A, domain 2"/>
    <property type="match status" value="1"/>
</dbReference>
<dbReference type="Gene3D" id="3.50.50.60">
    <property type="entry name" value="FAD/NAD(P)-binding domain"/>
    <property type="match status" value="1"/>
</dbReference>
<dbReference type="InterPro" id="IPR006076">
    <property type="entry name" value="FAD-dep_OxRdtase"/>
</dbReference>
<dbReference type="InterPro" id="IPR036188">
    <property type="entry name" value="FAD/NAD-bd_sf"/>
</dbReference>
<dbReference type="PANTHER" id="PTHR13847:SF289">
    <property type="entry name" value="GLYCINE OXIDASE"/>
    <property type="match status" value="1"/>
</dbReference>
<dbReference type="PANTHER" id="PTHR13847">
    <property type="entry name" value="SARCOSINE DEHYDROGENASE-RELATED"/>
    <property type="match status" value="1"/>
</dbReference>
<dbReference type="Pfam" id="PF01266">
    <property type="entry name" value="DAO"/>
    <property type="match status" value="1"/>
</dbReference>
<dbReference type="SUPFAM" id="SSF51905">
    <property type="entry name" value="FAD/NAD(P)-binding domain"/>
    <property type="match status" value="1"/>
</dbReference>
<sequence length="428" mass="47791">MRVATQLRVGIVGGGWNGCHLALELKKQGHRVSLFEQKPDIFQGVSGNFGIRLHKGPHYPRSKATRDSCREALVKFCETYPELVVHHESAIYAHGEADALGNPSKVSDEAFRDVCYESPECTAVDPKANGFQGLISAYNLDEPSVAIGDRLRNTFKEKLGRAGIYVHLNATVDRIIHTEDTNRIQTGDGQYVFDVVINATGYTSLLPQNIADALPVDIGITYQTCIALVYEDQQPQEKPLSFIVMDGWFPCVMPAIDTNEPLQKKYILTHGSYTILGSFDRHEEGQELLDSLDEEAIAARIKPHCEREITRFWPGFLDRFQYRGWKGSVLAKLKTTSEFRSSLTFEKDGVIHIFPGKVSNVVTAAEEVVPLINDIARRRHGVVREWNGVRFTVSSAFHTHSKEIGDKPGLGEHHTSNLQTYVSLVTAN</sequence>
<protein>
    <recommendedName>
        <fullName evidence="16">Probable FAD-dependent monooxygenase kojA</fullName>
        <ecNumber evidence="17">1.14.13.-</ecNumber>
    </recommendedName>
    <alternativeName>
        <fullName evidence="15">Kojic acid biosynthesis cluster protein A</fullName>
    </alternativeName>
</protein>
<gene>
    <name evidence="15" type="primary">kojA</name>
    <name type="ORF">AO090113000136</name>
</gene>
<feature type="chain" id="PRO_0000436873" description="Probable FAD-dependent monooxygenase kojA">
    <location>
        <begin position="1"/>
        <end position="428"/>
    </location>
</feature>
<feature type="binding site" evidence="1">
    <location>
        <begin position="52"/>
        <end position="60"/>
    </location>
    <ligand>
        <name>FAD</name>
        <dbReference type="ChEBI" id="CHEBI:57692"/>
    </ligand>
</feature>
<feature type="binding site" evidence="1">
    <location>
        <begin position="328"/>
        <end position="329"/>
    </location>
    <ligand>
        <name>FAD</name>
        <dbReference type="ChEBI" id="CHEBI:57692"/>
    </ligand>
</feature>
<feature type="site" description="Important for catalytic activity" evidence="1">
    <location>
        <position position="421"/>
    </location>
</feature>
<accession>Q2U5I0</accession>
<keyword id="KW-0274">FAD</keyword>
<keyword id="KW-0285">Flavoprotein</keyword>
<keyword id="KW-0503">Monooxygenase</keyword>
<keyword id="KW-0560">Oxidoreductase</keyword>
<keyword id="KW-1185">Reference proteome</keyword>
<name>KOJA_ASPOR</name>
<proteinExistence type="evidence at protein level"/>
<organism>
    <name type="scientific">Aspergillus oryzae (strain ATCC 42149 / RIB 40)</name>
    <name type="common">Yellow koji mold</name>
    <dbReference type="NCBI Taxonomy" id="510516"/>
    <lineage>
        <taxon>Eukaryota</taxon>
        <taxon>Fungi</taxon>
        <taxon>Dikarya</taxon>
        <taxon>Ascomycota</taxon>
        <taxon>Pezizomycotina</taxon>
        <taxon>Eurotiomycetes</taxon>
        <taxon>Eurotiomycetidae</taxon>
        <taxon>Eurotiales</taxon>
        <taxon>Aspergillaceae</taxon>
        <taxon>Aspergillus</taxon>
        <taxon>Aspergillus subgen. Circumdati</taxon>
    </lineage>
</organism>
<comment type="function">
    <text evidence="3 10 11 13">Probable FAD-dependent monooxygenase; part of the gene cluster that mediates the biosynthesis of 5-hydroxy-2-hydroxymethyl-1,4-pyrone, also know as kojic acid, a by-product in the fermentation process of malting rice that acts as a chelation agent (PubMed:20849972, PubMed:35034288, PubMed:35034313). Glucose might be converted to kojic acid by a combination of dehydrogenase and dehydratase reactions involving kojA and probably additional enzymes (PubMed:20849972). Improves the antioxidant capacity via the accumulation of kojic acid that is also a strong oxidant (PubMed:37776988).</text>
</comment>
<comment type="cofactor">
    <cofactor evidence="16">
        <name>FAD</name>
        <dbReference type="ChEBI" id="CHEBI:57692"/>
    </cofactor>
</comment>
<comment type="induction">
    <text evidence="4 5 6 8 9 10 12">Expression is controlled by the kojic acid gene cluster transcription factor kojR (PubMed:21514215). Expression is also positively regulated by the secondary metabolism general regulator laeA (PubMed:21897021). Expression is negatively regulated by the transcription factor kpeA (PubMed:30790620). Nitrogen deficiency increases the expression (PubMed:26657710). Expression is also regulated by the kojic acid related proteins kap1, kap2 and kap6 (PubMed:34950983, PubMed:35034288, PubMed:35922587).</text>
</comment>
<comment type="disruption phenotype">
    <text evidence="3 10 11 12">Leads to the loss of kojic acid production (PubMed:20849972, PubMed:35034288, PubMed:35034313). Leads to the declined expression of kap6 (PubMed:35922587).</text>
</comment>
<comment type="biotechnology">
    <text evidence="2 7 14">Kojic acid can be used for several biotechnological applications, including use as an antibiotic, as an additive to prevent browning of food materials, and as an antioxidant (PubMed:17119644). Kojic acid is also interesting as an inhibitor of tyrosinase (PubMed:7714722). Finally, kojic acid has also been shown to have strong nematicidal activity (PubMed:27197670).</text>
</comment>
<comment type="similarity">
    <text evidence="16">Belongs to the aromatic-ring hydroxylase family.</text>
</comment>